<name>ASTE_SHEPA</name>
<keyword id="KW-0056">Arginine metabolism</keyword>
<keyword id="KW-0378">Hydrolase</keyword>
<keyword id="KW-0479">Metal-binding</keyword>
<keyword id="KW-1185">Reference proteome</keyword>
<keyword id="KW-0862">Zinc</keyword>
<feature type="chain" id="PRO_1000083549" description="Succinylglutamate desuccinylase">
    <location>
        <begin position="1"/>
        <end position="345"/>
    </location>
</feature>
<feature type="active site" evidence="1">
    <location>
        <position position="225"/>
    </location>
</feature>
<feature type="binding site" evidence="1">
    <location>
        <position position="64"/>
    </location>
    <ligand>
        <name>Zn(2+)</name>
        <dbReference type="ChEBI" id="CHEBI:29105"/>
    </ligand>
</feature>
<feature type="binding site" evidence="1">
    <location>
        <position position="67"/>
    </location>
    <ligand>
        <name>Zn(2+)</name>
        <dbReference type="ChEBI" id="CHEBI:29105"/>
    </ligand>
</feature>
<feature type="binding site" evidence="1">
    <location>
        <position position="161"/>
    </location>
    <ligand>
        <name>Zn(2+)</name>
        <dbReference type="ChEBI" id="CHEBI:29105"/>
    </ligand>
</feature>
<gene>
    <name evidence="1" type="primary">astE</name>
    <name type="ordered locus">Spea_2247</name>
</gene>
<evidence type="ECO:0000255" key="1">
    <source>
        <dbReference type="HAMAP-Rule" id="MF_00767"/>
    </source>
</evidence>
<sequence>MFQQLKQSKDFLALTLAHPQYLTESFEFDLANQVHVEVWDTGVIMFEPLGVKHTKDLVLSCAVHGNETAPIELCNDLMTQLLDEQLVLKQRVLFLIGNPPAIHNGTRFIDENLNRLFNGAHSRGEGLCNPERVRAQKLEQYVDKFFSAHSGERHRMHYDLHTAIRASKHEKFAIYPYRGNRKYSKEQIMFLESCGVNTILFHHEPTTTFSYFSSENYHADAFTIELGKVFPMGQNDMTRFIAMKEMLTLLMCGEELKLPSFDMKRLNLYQVCRSVNKRYDDFEFTFTNDVENFTAFPRGYTLAKEGGFEVKVEHEFESIVFPNAKVPVGQRTVLCLKSADESRLD</sequence>
<proteinExistence type="inferred from homology"/>
<protein>
    <recommendedName>
        <fullName evidence="1">Succinylglutamate desuccinylase</fullName>
        <ecNumber evidence="1">3.5.1.96</ecNumber>
    </recommendedName>
</protein>
<reference key="1">
    <citation type="submission" date="2007-10" db="EMBL/GenBank/DDBJ databases">
        <title>Complete sequence of Shewanella pealeana ATCC 700345.</title>
        <authorList>
            <consortium name="US DOE Joint Genome Institute"/>
            <person name="Copeland A."/>
            <person name="Lucas S."/>
            <person name="Lapidus A."/>
            <person name="Barry K."/>
            <person name="Glavina del Rio T."/>
            <person name="Dalin E."/>
            <person name="Tice H."/>
            <person name="Pitluck S."/>
            <person name="Chertkov O."/>
            <person name="Brettin T."/>
            <person name="Bruce D."/>
            <person name="Detter J.C."/>
            <person name="Han C."/>
            <person name="Schmutz J."/>
            <person name="Larimer F."/>
            <person name="Land M."/>
            <person name="Hauser L."/>
            <person name="Kyrpides N."/>
            <person name="Kim E."/>
            <person name="Zhao J.-S.Z."/>
            <person name="Manno D."/>
            <person name="Hawari J."/>
            <person name="Richardson P."/>
        </authorList>
    </citation>
    <scope>NUCLEOTIDE SEQUENCE [LARGE SCALE GENOMIC DNA]</scope>
    <source>
        <strain>ATCC 700345 / ANG-SQ1</strain>
    </source>
</reference>
<organism>
    <name type="scientific">Shewanella pealeana (strain ATCC 700345 / ANG-SQ1)</name>
    <dbReference type="NCBI Taxonomy" id="398579"/>
    <lineage>
        <taxon>Bacteria</taxon>
        <taxon>Pseudomonadati</taxon>
        <taxon>Pseudomonadota</taxon>
        <taxon>Gammaproteobacteria</taxon>
        <taxon>Alteromonadales</taxon>
        <taxon>Shewanellaceae</taxon>
        <taxon>Shewanella</taxon>
    </lineage>
</organism>
<accession>A8H4T0</accession>
<comment type="function">
    <text evidence="1">Transforms N(2)-succinylglutamate into succinate and glutamate.</text>
</comment>
<comment type="catalytic activity">
    <reaction evidence="1">
        <text>N-succinyl-L-glutamate + H2O = L-glutamate + succinate</text>
        <dbReference type="Rhea" id="RHEA:15169"/>
        <dbReference type="ChEBI" id="CHEBI:15377"/>
        <dbReference type="ChEBI" id="CHEBI:29985"/>
        <dbReference type="ChEBI" id="CHEBI:30031"/>
        <dbReference type="ChEBI" id="CHEBI:58763"/>
        <dbReference type="EC" id="3.5.1.96"/>
    </reaction>
</comment>
<comment type="cofactor">
    <cofactor evidence="1">
        <name>Zn(2+)</name>
        <dbReference type="ChEBI" id="CHEBI:29105"/>
    </cofactor>
    <text evidence="1">Binds 1 zinc ion per subunit.</text>
</comment>
<comment type="pathway">
    <text evidence="1">Amino-acid degradation; L-arginine degradation via AST pathway; L-glutamate and succinate from L-arginine: step 5/5.</text>
</comment>
<comment type="similarity">
    <text evidence="1">Belongs to the AspA/AstE family. Succinylglutamate desuccinylase subfamily.</text>
</comment>
<dbReference type="EC" id="3.5.1.96" evidence="1"/>
<dbReference type="EMBL" id="CP000851">
    <property type="protein sequence ID" value="ABV87567.1"/>
    <property type="molecule type" value="Genomic_DNA"/>
</dbReference>
<dbReference type="RefSeq" id="WP_012155483.1">
    <property type="nucleotide sequence ID" value="NC_009901.1"/>
</dbReference>
<dbReference type="SMR" id="A8H4T0"/>
<dbReference type="STRING" id="398579.Spea_2247"/>
<dbReference type="KEGG" id="spl:Spea_2247"/>
<dbReference type="eggNOG" id="COG2988">
    <property type="taxonomic scope" value="Bacteria"/>
</dbReference>
<dbReference type="HOGENOM" id="CLU_071608_0_0_6"/>
<dbReference type="OrthoDB" id="5290473at2"/>
<dbReference type="UniPathway" id="UPA00185">
    <property type="reaction ID" value="UER00283"/>
</dbReference>
<dbReference type="Proteomes" id="UP000002608">
    <property type="component" value="Chromosome"/>
</dbReference>
<dbReference type="GO" id="GO:0016788">
    <property type="term" value="F:hydrolase activity, acting on ester bonds"/>
    <property type="evidence" value="ECO:0007669"/>
    <property type="project" value="UniProtKB-UniRule"/>
</dbReference>
<dbReference type="GO" id="GO:0009017">
    <property type="term" value="F:succinylglutamate desuccinylase activity"/>
    <property type="evidence" value="ECO:0007669"/>
    <property type="project" value="UniProtKB-EC"/>
</dbReference>
<dbReference type="GO" id="GO:0008270">
    <property type="term" value="F:zinc ion binding"/>
    <property type="evidence" value="ECO:0007669"/>
    <property type="project" value="UniProtKB-UniRule"/>
</dbReference>
<dbReference type="GO" id="GO:0019544">
    <property type="term" value="P:arginine catabolic process to glutamate"/>
    <property type="evidence" value="ECO:0007669"/>
    <property type="project" value="UniProtKB-UniRule"/>
</dbReference>
<dbReference type="GO" id="GO:0019545">
    <property type="term" value="P:arginine catabolic process to succinate"/>
    <property type="evidence" value="ECO:0007669"/>
    <property type="project" value="UniProtKB-UniRule"/>
</dbReference>
<dbReference type="CDD" id="cd03855">
    <property type="entry name" value="M14_ASTE"/>
    <property type="match status" value="1"/>
</dbReference>
<dbReference type="Gene3D" id="3.40.630.10">
    <property type="entry name" value="Zn peptidases"/>
    <property type="match status" value="1"/>
</dbReference>
<dbReference type="HAMAP" id="MF_00767">
    <property type="entry name" value="Arg_catab_AstE"/>
    <property type="match status" value="1"/>
</dbReference>
<dbReference type="InterPro" id="IPR050178">
    <property type="entry name" value="AspA/AstE_fam"/>
</dbReference>
<dbReference type="InterPro" id="IPR055438">
    <property type="entry name" value="AstE_AspA_cat"/>
</dbReference>
<dbReference type="InterPro" id="IPR007036">
    <property type="entry name" value="Aste_AspA_hybrid_dom"/>
</dbReference>
<dbReference type="InterPro" id="IPR016681">
    <property type="entry name" value="SuccinylGlu_desuccinylase"/>
</dbReference>
<dbReference type="NCBIfam" id="TIGR03242">
    <property type="entry name" value="arg_catab_astE"/>
    <property type="match status" value="1"/>
</dbReference>
<dbReference type="NCBIfam" id="NF003706">
    <property type="entry name" value="PRK05324.1"/>
    <property type="match status" value="1"/>
</dbReference>
<dbReference type="PANTHER" id="PTHR15162">
    <property type="entry name" value="ASPARTOACYLASE"/>
    <property type="match status" value="1"/>
</dbReference>
<dbReference type="PANTHER" id="PTHR15162:SF7">
    <property type="entry name" value="SUCCINYLGLUTAMATE DESUCCINYLASE"/>
    <property type="match status" value="1"/>
</dbReference>
<dbReference type="Pfam" id="PF24827">
    <property type="entry name" value="AstE_AspA_cat"/>
    <property type="match status" value="1"/>
</dbReference>
<dbReference type="Pfam" id="PF04952">
    <property type="entry name" value="AstE_AspA_hybrid"/>
    <property type="match status" value="1"/>
</dbReference>
<dbReference type="PIRSF" id="PIRSF017020">
    <property type="entry name" value="AstE"/>
    <property type="match status" value="1"/>
</dbReference>
<dbReference type="SUPFAM" id="SSF53187">
    <property type="entry name" value="Zn-dependent exopeptidases"/>
    <property type="match status" value="1"/>
</dbReference>